<organism>
    <name type="scientific">Arabidopsis thaliana</name>
    <name type="common">Mouse-ear cress</name>
    <dbReference type="NCBI Taxonomy" id="3702"/>
    <lineage>
        <taxon>Eukaryota</taxon>
        <taxon>Viridiplantae</taxon>
        <taxon>Streptophyta</taxon>
        <taxon>Embryophyta</taxon>
        <taxon>Tracheophyta</taxon>
        <taxon>Spermatophyta</taxon>
        <taxon>Magnoliopsida</taxon>
        <taxon>eudicotyledons</taxon>
        <taxon>Gunneridae</taxon>
        <taxon>Pentapetalae</taxon>
        <taxon>rosids</taxon>
        <taxon>malvids</taxon>
        <taxon>Brassicales</taxon>
        <taxon>Brassicaceae</taxon>
        <taxon>Camelineae</taxon>
        <taxon>Arabidopsis</taxon>
    </lineage>
</organism>
<gene>
    <name evidence="4" type="primary">CYSTM4</name>
    <name evidence="6" type="ordered locus">At2g32190</name>
    <name evidence="7" type="ORF">F22D22.6</name>
</gene>
<dbReference type="EMBL" id="AC006223">
    <property type="protein sequence ID" value="AAD15386.1"/>
    <property type="molecule type" value="Genomic_DNA"/>
</dbReference>
<dbReference type="EMBL" id="CP002685">
    <property type="protein sequence ID" value="AEC08647.1"/>
    <property type="molecule type" value="Genomic_DNA"/>
</dbReference>
<dbReference type="EMBL" id="AK118248">
    <property type="protein sequence ID" value="BAC42867.1"/>
    <property type="molecule type" value="mRNA"/>
</dbReference>
<dbReference type="EMBL" id="BT005143">
    <property type="protein sequence ID" value="AAO50676.1"/>
    <property type="molecule type" value="mRNA"/>
</dbReference>
<dbReference type="EMBL" id="AY088012">
    <property type="protein sequence ID" value="AAM65558.1"/>
    <property type="molecule type" value="mRNA"/>
</dbReference>
<dbReference type="PIR" id="A84730">
    <property type="entry name" value="A84730"/>
</dbReference>
<dbReference type="RefSeq" id="NP_565739.1">
    <property type="nucleotide sequence ID" value="NM_128778.5"/>
</dbReference>
<dbReference type="FunCoup" id="Q9SKY1">
    <property type="interactions" value="1"/>
</dbReference>
<dbReference type="STRING" id="3702.Q9SKY1"/>
<dbReference type="GlyGen" id="Q9SKY1">
    <property type="glycosylation" value="1 site"/>
</dbReference>
<dbReference type="PaxDb" id="3702-AT2G32190.1"/>
<dbReference type="EnsemblPlants" id="AT2G32190.1">
    <property type="protein sequence ID" value="AT2G32190.1"/>
    <property type="gene ID" value="AT2G32190"/>
</dbReference>
<dbReference type="GeneID" id="817778"/>
<dbReference type="Gramene" id="AT2G32190.1">
    <property type="protein sequence ID" value="AT2G32190.1"/>
    <property type="gene ID" value="AT2G32190"/>
</dbReference>
<dbReference type="KEGG" id="ath:AT2G32190"/>
<dbReference type="Araport" id="AT2G32190"/>
<dbReference type="TAIR" id="AT2G32190">
    <property type="gene designation" value="ATHCYSTM4"/>
</dbReference>
<dbReference type="eggNOG" id="ENOG502S924">
    <property type="taxonomic scope" value="Eukaryota"/>
</dbReference>
<dbReference type="HOGENOM" id="CLU_128451_2_2_1"/>
<dbReference type="InParanoid" id="Q9SKY1"/>
<dbReference type="OMA" id="MGEYDHG"/>
<dbReference type="OrthoDB" id="785836at2759"/>
<dbReference type="PhylomeDB" id="Q9SKY1"/>
<dbReference type="PRO" id="PR:Q9SKY1"/>
<dbReference type="Proteomes" id="UP000006548">
    <property type="component" value="Chromosome 2"/>
</dbReference>
<dbReference type="ExpressionAtlas" id="Q9SKY1">
    <property type="expression patterns" value="baseline and differential"/>
</dbReference>
<dbReference type="GO" id="GO:0005737">
    <property type="term" value="C:cytoplasm"/>
    <property type="evidence" value="ECO:0000314"/>
    <property type="project" value="UniProtKB"/>
</dbReference>
<dbReference type="GO" id="GO:0005886">
    <property type="term" value="C:plasma membrane"/>
    <property type="evidence" value="ECO:0000314"/>
    <property type="project" value="UniProtKB"/>
</dbReference>
<dbReference type="InterPro" id="IPR028144">
    <property type="entry name" value="CYSTM_dom"/>
</dbReference>
<dbReference type="InterPro" id="IPR044850">
    <property type="entry name" value="WIH1-like"/>
</dbReference>
<dbReference type="PANTHER" id="PTHR31568:SF138">
    <property type="entry name" value="PROTEIN CYSTEINE-RICH TRANSMEMBRANE MODULE 4-RELATED"/>
    <property type="match status" value="1"/>
</dbReference>
<dbReference type="PANTHER" id="PTHR31568">
    <property type="entry name" value="RCG49325, ISOFORM CRA_A"/>
    <property type="match status" value="1"/>
</dbReference>
<dbReference type="Pfam" id="PF12734">
    <property type="entry name" value="CYSTM"/>
    <property type="match status" value="1"/>
</dbReference>
<feature type="chain" id="PRO_0000454801" description="Protein CYSTEINE-RICH TRANSMEMBRANE MODULE 4">
    <location>
        <begin position="1"/>
        <end position="71"/>
    </location>
</feature>
<feature type="transmembrane region" description="Helical" evidence="1">
    <location>
        <begin position="48"/>
        <end position="64"/>
    </location>
</feature>
<feature type="region of interest" description="Disordered" evidence="2">
    <location>
        <begin position="1"/>
        <end position="31"/>
    </location>
</feature>
<feature type="compositionally biased region" description="Polar residues" evidence="2">
    <location>
        <begin position="1"/>
        <end position="12"/>
    </location>
</feature>
<feature type="compositionally biased region" description="Pro residues" evidence="2">
    <location>
        <begin position="14"/>
        <end position="30"/>
    </location>
</feature>
<name>CSTM4_ARATH</name>
<sequence length="71" mass="7380">MSQYSQNQSSGAYPTPPVSTGPYMTPPPLGYPTSDISHATVAPVETKSKGDGFLKGCLAAMCCCCVLDACF</sequence>
<evidence type="ECO:0000255" key="1"/>
<evidence type="ECO:0000256" key="2">
    <source>
        <dbReference type="SAM" id="MobiDB-lite"/>
    </source>
</evidence>
<evidence type="ECO:0000269" key="3">
    <source>
    </source>
</evidence>
<evidence type="ECO:0000303" key="4">
    <source>
    </source>
</evidence>
<evidence type="ECO:0000305" key="5"/>
<evidence type="ECO:0000312" key="6">
    <source>
        <dbReference type="Araport" id="AT2G32190"/>
    </source>
</evidence>
<evidence type="ECO:0000312" key="7">
    <source>
        <dbReference type="EMBL" id="AAD15386.1"/>
    </source>
</evidence>
<reference key="1">
    <citation type="journal article" date="1999" name="Nature">
        <title>Sequence and analysis of chromosome 2 of the plant Arabidopsis thaliana.</title>
        <authorList>
            <person name="Lin X."/>
            <person name="Kaul S."/>
            <person name="Rounsley S.D."/>
            <person name="Shea T.P."/>
            <person name="Benito M.-I."/>
            <person name="Town C.D."/>
            <person name="Fujii C.Y."/>
            <person name="Mason T.M."/>
            <person name="Bowman C.L."/>
            <person name="Barnstead M.E."/>
            <person name="Feldblyum T.V."/>
            <person name="Buell C.R."/>
            <person name="Ketchum K.A."/>
            <person name="Lee J.J."/>
            <person name="Ronning C.M."/>
            <person name="Koo H.L."/>
            <person name="Moffat K.S."/>
            <person name="Cronin L.A."/>
            <person name="Shen M."/>
            <person name="Pai G."/>
            <person name="Van Aken S."/>
            <person name="Umayam L."/>
            <person name="Tallon L.J."/>
            <person name="Gill J.E."/>
            <person name="Adams M.D."/>
            <person name="Carrera A.J."/>
            <person name="Creasy T.H."/>
            <person name="Goodman H.M."/>
            <person name="Somerville C.R."/>
            <person name="Copenhaver G.P."/>
            <person name="Preuss D."/>
            <person name="Nierman W.C."/>
            <person name="White O."/>
            <person name="Eisen J.A."/>
            <person name="Salzberg S.L."/>
            <person name="Fraser C.M."/>
            <person name="Venter J.C."/>
        </authorList>
    </citation>
    <scope>NUCLEOTIDE SEQUENCE [LARGE SCALE GENOMIC DNA]</scope>
    <source>
        <strain>cv. Columbia</strain>
    </source>
</reference>
<reference key="2">
    <citation type="journal article" date="2017" name="Plant J.">
        <title>Araport11: a complete reannotation of the Arabidopsis thaliana reference genome.</title>
        <authorList>
            <person name="Cheng C.Y."/>
            <person name="Krishnakumar V."/>
            <person name="Chan A.P."/>
            <person name="Thibaud-Nissen F."/>
            <person name="Schobel S."/>
            <person name="Town C.D."/>
        </authorList>
    </citation>
    <scope>GENOME REANNOTATION</scope>
    <source>
        <strain>cv. Columbia</strain>
    </source>
</reference>
<reference key="3">
    <citation type="journal article" date="2002" name="Science">
        <title>Functional annotation of a full-length Arabidopsis cDNA collection.</title>
        <authorList>
            <person name="Seki M."/>
            <person name="Narusaka M."/>
            <person name="Kamiya A."/>
            <person name="Ishida J."/>
            <person name="Satou M."/>
            <person name="Sakurai T."/>
            <person name="Nakajima M."/>
            <person name="Enju A."/>
            <person name="Akiyama K."/>
            <person name="Oono Y."/>
            <person name="Muramatsu M."/>
            <person name="Hayashizaki Y."/>
            <person name="Kawai J."/>
            <person name="Carninci P."/>
            <person name="Itoh M."/>
            <person name="Ishii Y."/>
            <person name="Arakawa T."/>
            <person name="Shibata K."/>
            <person name="Shinagawa A."/>
            <person name="Shinozaki K."/>
        </authorList>
    </citation>
    <scope>NUCLEOTIDE SEQUENCE [LARGE SCALE MRNA]</scope>
    <source>
        <strain>cv. Columbia</strain>
    </source>
</reference>
<reference key="4">
    <citation type="journal article" date="2003" name="Science">
        <title>Empirical analysis of transcriptional activity in the Arabidopsis genome.</title>
        <authorList>
            <person name="Yamada K."/>
            <person name="Lim J."/>
            <person name="Dale J.M."/>
            <person name="Chen H."/>
            <person name="Shinn P."/>
            <person name="Palm C.J."/>
            <person name="Southwick A.M."/>
            <person name="Wu H.C."/>
            <person name="Kim C.J."/>
            <person name="Nguyen M."/>
            <person name="Pham P.K."/>
            <person name="Cheuk R.F."/>
            <person name="Karlin-Newmann G."/>
            <person name="Liu S.X."/>
            <person name="Lam B."/>
            <person name="Sakano H."/>
            <person name="Wu T."/>
            <person name="Yu G."/>
            <person name="Miranda M."/>
            <person name="Quach H.L."/>
            <person name="Tripp M."/>
            <person name="Chang C.H."/>
            <person name="Lee J.M."/>
            <person name="Toriumi M.J."/>
            <person name="Chan M.M."/>
            <person name="Tang C.C."/>
            <person name="Onodera C.S."/>
            <person name="Deng J.M."/>
            <person name="Akiyama K."/>
            <person name="Ansari Y."/>
            <person name="Arakawa T."/>
            <person name="Banh J."/>
            <person name="Banno F."/>
            <person name="Bowser L."/>
            <person name="Brooks S.Y."/>
            <person name="Carninci P."/>
            <person name="Chao Q."/>
            <person name="Choy N."/>
            <person name="Enju A."/>
            <person name="Goldsmith A.D."/>
            <person name="Gurjal M."/>
            <person name="Hansen N.F."/>
            <person name="Hayashizaki Y."/>
            <person name="Johnson-Hopson C."/>
            <person name="Hsuan V.W."/>
            <person name="Iida K."/>
            <person name="Karnes M."/>
            <person name="Khan S."/>
            <person name="Koesema E."/>
            <person name="Ishida J."/>
            <person name="Jiang P.X."/>
            <person name="Jones T."/>
            <person name="Kawai J."/>
            <person name="Kamiya A."/>
            <person name="Meyers C."/>
            <person name="Nakajima M."/>
            <person name="Narusaka M."/>
            <person name="Seki M."/>
            <person name="Sakurai T."/>
            <person name="Satou M."/>
            <person name="Tamse R."/>
            <person name="Vaysberg M."/>
            <person name="Wallender E.K."/>
            <person name="Wong C."/>
            <person name="Yamamura Y."/>
            <person name="Yuan S."/>
            <person name="Shinozaki K."/>
            <person name="Davis R.W."/>
            <person name="Theologis A."/>
            <person name="Ecker J.R."/>
        </authorList>
    </citation>
    <scope>NUCLEOTIDE SEQUENCE [LARGE SCALE MRNA]</scope>
    <source>
        <strain>cv. Columbia</strain>
    </source>
</reference>
<reference key="5">
    <citation type="submission" date="2002-03" db="EMBL/GenBank/DDBJ databases">
        <title>Full-length cDNA from Arabidopsis thaliana.</title>
        <authorList>
            <person name="Brover V.V."/>
            <person name="Troukhan M.E."/>
            <person name="Alexandrov N.A."/>
            <person name="Lu Y.-P."/>
            <person name="Flavell R.B."/>
            <person name="Feldmann K.A."/>
        </authorList>
    </citation>
    <scope>NUCLEOTIDE SEQUENCE [LARGE SCALE MRNA]</scope>
</reference>
<reference key="6">
    <citation type="journal article" date="2018" name="Plant Cell Physiol.">
        <title>CYSTM, a novel non-secreted cysteine-rich peptide family, involved in environmental stresses in Arabidopsis thaliana.</title>
        <authorList>
            <person name="Xu Y."/>
            <person name="Yu Z."/>
            <person name="Zhang D."/>
            <person name="Huang J."/>
            <person name="Wu C."/>
            <person name="Yang G."/>
            <person name="Yan K."/>
            <person name="Zhang S."/>
            <person name="Zheng C."/>
        </authorList>
    </citation>
    <scope>FUNCTION</scope>
    <scope>INTERACTION WITH CYSTM6; CYSTM7; CYSTM12 AND WIH1/CYSTM13</scope>
    <scope>TISSUE SPECIFICITY</scope>
    <scope>INDUCTION BY HEAT; COLD; DROUGHT; OXIDATION AND SALT</scope>
    <scope>SUBCELLULAR LOCATION</scope>
    <source>
        <strain>cv. Columbia</strain>
    </source>
</reference>
<keyword id="KW-1003">Cell membrane</keyword>
<keyword id="KW-0963">Cytoplasm</keyword>
<keyword id="KW-0472">Membrane</keyword>
<keyword id="KW-1185">Reference proteome</keyword>
<keyword id="KW-0812">Transmembrane</keyword>
<keyword id="KW-1133">Transmembrane helix</keyword>
<proteinExistence type="evidence at protein level"/>
<accession>Q9SKY1</accession>
<protein>
    <recommendedName>
        <fullName evidence="4">Protein CYSTEINE-RICH TRANSMEMBRANE MODULE 4</fullName>
        <shortName evidence="4">AthCYSTM4</shortName>
    </recommendedName>
</protein>
<comment type="function">
    <text evidence="4">Involved in resistance to abiotic stress.</text>
</comment>
<comment type="subunit">
    <text evidence="3">Heterodimers (PubMed:29272523). Interacts with CYSTM6, CYSTM7, CYSTM12 and WIH1/CYSTM13 (PubMed:29272523).</text>
</comment>
<comment type="subcellular location">
    <subcellularLocation>
        <location evidence="3">Cell membrane</location>
        <topology evidence="1">Single-pass membrane protein</topology>
    </subcellularLocation>
    <subcellularLocation>
        <location evidence="3">Cytoplasm</location>
    </subcellularLocation>
</comment>
<comment type="tissue specificity">
    <text evidence="3">Mostly expressed in roots, stems, rosette leaves and siliques and, to a lower extent, in flowers and cauline leaves.</text>
</comment>
<comment type="induction">
    <text evidence="3">Induced by heat in roots, but suppressed in shoots (PubMed:29272523). Accumulates in response to cold, drought, oxidation stress and salt (PubMed:29272523).</text>
</comment>
<comment type="similarity">
    <text evidence="5">Belongs to the CYSTM1 family.</text>
</comment>